<protein>
    <recommendedName>
        <fullName>Charged multivesicular body protein 1a</fullName>
    </recommendedName>
    <alternativeName>
        <fullName>Chromatin-modifying protein 1a</fullName>
        <shortName>CHMP1a</shortName>
    </alternativeName>
</protein>
<feature type="chain" id="PRO_0000211450" description="Charged multivesicular body protein 1a">
    <location>
        <begin position="1"/>
        <end position="196"/>
    </location>
</feature>
<feature type="region of interest" description="Disordered" evidence="4">
    <location>
        <begin position="173"/>
        <end position="196"/>
    </location>
</feature>
<feature type="coiled-coil region" evidence="3">
    <location>
        <begin position="5"/>
        <end position="47"/>
    </location>
</feature>
<feature type="coiled-coil region" evidence="3">
    <location>
        <begin position="102"/>
        <end position="124"/>
    </location>
</feature>
<feature type="short sequence motif" description="MIT-interacting motif">
    <location>
        <begin position="185"/>
        <end position="195"/>
    </location>
</feature>
<feature type="modified residue" description="N-acetylmethionine" evidence="2">
    <location>
        <position position="1"/>
    </location>
</feature>
<feature type="modified residue" description="Phosphoserine" evidence="2">
    <location>
        <position position="101"/>
    </location>
</feature>
<feature type="modified residue" description="Phosphoserine" evidence="2">
    <location>
        <position position="173"/>
    </location>
</feature>
<organism>
    <name type="scientific">Pongo abelii</name>
    <name type="common">Sumatran orangutan</name>
    <name type="synonym">Pongo pygmaeus abelii</name>
    <dbReference type="NCBI Taxonomy" id="9601"/>
    <lineage>
        <taxon>Eukaryota</taxon>
        <taxon>Metazoa</taxon>
        <taxon>Chordata</taxon>
        <taxon>Craniata</taxon>
        <taxon>Vertebrata</taxon>
        <taxon>Euteleostomi</taxon>
        <taxon>Mammalia</taxon>
        <taxon>Eutheria</taxon>
        <taxon>Euarchontoglires</taxon>
        <taxon>Primates</taxon>
        <taxon>Haplorrhini</taxon>
        <taxon>Catarrhini</taxon>
        <taxon>Hominidae</taxon>
        <taxon>Pongo</taxon>
    </lineage>
</organism>
<comment type="function">
    <text evidence="1">Probable peripherally associated component of the endosomal sorting required for transport complex III (ESCRT-III) which is involved in multivesicular bodies (MVBs) formation and sorting of endosomal cargo proteins into MVBs. MVBs contain intraluminal vesicles (ILVs) that are generated by invagination and scission from the limiting membrane of the endosome and mostly are delivered to lysosomes enabling degradation of membrane proteins, such as stimulated growth factor receptors, lysosomal enzymes and lipids. The MVB pathway appears to require the sequential function of ESCRT-O, -I,-II and -III complexes. ESCRT-III proteins mostly dissociate from the invaginating membrane before the ILV is released. The ESCRT machinery also functions in topologically equivalent membrane fission events, such as the terminal stages of cytokinesis and the budding of enveloped viruses (lentiviruses). ESCRT-III proteins are believed to mediate the necessary vesicle extrusion and/or membrane fission activities, possibly in conjunction with the AAA ATPase VPS4. Involved in cytokinesis. Involved in recruiting VPS4A and/or VPS4B to the midbody of dividing cells. May also be involved in chromosome condensation. Targets the Polycomb group (PcG) protein BMI1/PCGF4 to regions of condensed chromatin. May play a role in stable cell cycle progression and in PcG gene silencing (By similarity).</text>
</comment>
<comment type="subunit">
    <text evidence="1">Probable peripherally associated component of the endosomal sorting required for transport complex III (ESCRT-III). ESCRT-III components are thought to multimerize to form a flat lattice on the perimeter membrane of the endosome. Several assembly forms of ESCRT-III may exist that interact and act sequentially. Self-associates. Interacts with CHMP1B. Interacts with VPS4A. Interacts with VPS4B. Interacts with PHF1. Interacts with IST1. Interacts with MITD1 (By similarity).</text>
</comment>
<comment type="subcellular location">
    <subcellularLocation>
        <location evidence="1">Cytoplasm</location>
    </subcellularLocation>
    <subcellularLocation>
        <location evidence="1">Endosome membrane</location>
        <topology evidence="1">Peripheral membrane protein</topology>
    </subcellularLocation>
    <subcellularLocation>
        <location evidence="1">Nucleus matrix</location>
    </subcellularLocation>
    <text evidence="1">The cytoplasmic form is partially membrane-associated and localizes to early endosomes. The nuclear form remains associated with the chromosome scaffold during mitosis. On overexpression, it localizes to nuclear bodies characterized by nuclease-resistant condensed chromatin (By similarity).</text>
</comment>
<comment type="similarity">
    <text evidence="5">Belongs to the SNF7 family.</text>
</comment>
<name>CHM1A_PONAB</name>
<reference key="1">
    <citation type="submission" date="2004-11" db="EMBL/GenBank/DDBJ databases">
        <authorList>
            <consortium name="The German cDNA consortium"/>
        </authorList>
    </citation>
    <scope>NUCLEOTIDE SEQUENCE [LARGE SCALE MRNA]</scope>
    <source>
        <tissue>Brain cortex</tissue>
    </source>
</reference>
<sequence length="196" mass="21703">MDDTLFQLKFTAKQLEKLAKKAEKDSKAEQAKVKKALLQKNVECARVYAENAIRKKNEGVNWLRMASRVDAVASKVQTAVTMKGVTKNMAQVTKALDKALSTMDLQKVSSVMDRFEQQVQNLDVHTSVMEDSMSSATTLTTPQEQVDSLIMQIAEENGLEVLDQLSQLPEGASAVGESSVRSQEDQLSRRLAALRN</sequence>
<accession>Q5R605</accession>
<gene>
    <name type="primary">CHMP1A</name>
    <name type="synonym">PCOLN3</name>
</gene>
<dbReference type="EMBL" id="CR860695">
    <property type="protein sequence ID" value="CAH92811.1"/>
    <property type="molecule type" value="mRNA"/>
</dbReference>
<dbReference type="RefSeq" id="NP_001126640.1">
    <property type="nucleotide sequence ID" value="NM_001133168.1"/>
</dbReference>
<dbReference type="SMR" id="Q5R605"/>
<dbReference type="FunCoup" id="Q5R605">
    <property type="interactions" value="2168"/>
</dbReference>
<dbReference type="STRING" id="9601.ENSPPYP00000008644"/>
<dbReference type="GeneID" id="100173638"/>
<dbReference type="KEGG" id="pon:100173638"/>
<dbReference type="CTD" id="5119"/>
<dbReference type="eggNOG" id="KOG3232">
    <property type="taxonomic scope" value="Eukaryota"/>
</dbReference>
<dbReference type="HOGENOM" id="CLU_080826_1_0_1"/>
<dbReference type="InParanoid" id="Q5R605"/>
<dbReference type="OrthoDB" id="10266568at2759"/>
<dbReference type="TreeFam" id="TF300076"/>
<dbReference type="Proteomes" id="UP000001595">
    <property type="component" value="Chromosome 16"/>
</dbReference>
<dbReference type="GO" id="GO:1904930">
    <property type="term" value="C:amphisome membrane"/>
    <property type="evidence" value="ECO:0007669"/>
    <property type="project" value="UniProtKB-ARBA"/>
</dbReference>
<dbReference type="GO" id="GO:0000776">
    <property type="term" value="C:kinetochore"/>
    <property type="evidence" value="ECO:0007669"/>
    <property type="project" value="UniProtKB-ARBA"/>
</dbReference>
<dbReference type="GO" id="GO:0005828">
    <property type="term" value="C:kinetochore microtubule"/>
    <property type="evidence" value="ECO:0007669"/>
    <property type="project" value="UniProtKB-ARBA"/>
</dbReference>
<dbReference type="GO" id="GO:0005765">
    <property type="term" value="C:lysosomal membrane"/>
    <property type="evidence" value="ECO:0007669"/>
    <property type="project" value="UniProtKB-ARBA"/>
</dbReference>
<dbReference type="GO" id="GO:0030496">
    <property type="term" value="C:midbody"/>
    <property type="evidence" value="ECO:0007669"/>
    <property type="project" value="UniProtKB-ARBA"/>
</dbReference>
<dbReference type="GO" id="GO:0032585">
    <property type="term" value="C:multivesicular body membrane"/>
    <property type="evidence" value="ECO:0007669"/>
    <property type="project" value="UniProtKB-ARBA"/>
</dbReference>
<dbReference type="GO" id="GO:0016363">
    <property type="term" value="C:nuclear matrix"/>
    <property type="evidence" value="ECO:0007669"/>
    <property type="project" value="UniProtKB-SubCell"/>
</dbReference>
<dbReference type="GO" id="GO:0005643">
    <property type="term" value="C:nuclear pore"/>
    <property type="evidence" value="ECO:0007669"/>
    <property type="project" value="UniProtKB-ARBA"/>
</dbReference>
<dbReference type="GO" id="GO:0097352">
    <property type="term" value="P:autophagosome maturation"/>
    <property type="evidence" value="ECO:0007669"/>
    <property type="project" value="UniProtKB-ARBA"/>
</dbReference>
<dbReference type="GO" id="GO:1902774">
    <property type="term" value="P:late endosome to lysosome transport"/>
    <property type="evidence" value="ECO:0007669"/>
    <property type="project" value="UniProtKB-ARBA"/>
</dbReference>
<dbReference type="GO" id="GO:0061952">
    <property type="term" value="P:midbody abscission"/>
    <property type="evidence" value="ECO:0007669"/>
    <property type="project" value="UniProtKB-ARBA"/>
</dbReference>
<dbReference type="GO" id="GO:0007080">
    <property type="term" value="P:mitotic metaphase chromosome alignment"/>
    <property type="evidence" value="ECO:0007669"/>
    <property type="project" value="UniProtKB-ARBA"/>
</dbReference>
<dbReference type="GO" id="GO:0071985">
    <property type="term" value="P:multivesicular body sorting pathway"/>
    <property type="evidence" value="ECO:0007669"/>
    <property type="project" value="UniProtKB-ARBA"/>
</dbReference>
<dbReference type="GO" id="GO:0031468">
    <property type="term" value="P:nuclear membrane reassembly"/>
    <property type="evidence" value="ECO:0007669"/>
    <property type="project" value="UniProtKB-ARBA"/>
</dbReference>
<dbReference type="GO" id="GO:0001778">
    <property type="term" value="P:plasma membrane repair"/>
    <property type="evidence" value="ECO:0007669"/>
    <property type="project" value="UniProtKB-ARBA"/>
</dbReference>
<dbReference type="GO" id="GO:0015031">
    <property type="term" value="P:protein transport"/>
    <property type="evidence" value="ECO:0007669"/>
    <property type="project" value="UniProtKB-KW"/>
</dbReference>
<dbReference type="GO" id="GO:1901673">
    <property type="term" value="P:regulation of mitotic spindle assembly"/>
    <property type="evidence" value="ECO:0007669"/>
    <property type="project" value="UniProtKB-ARBA"/>
</dbReference>
<dbReference type="GO" id="GO:0043162">
    <property type="term" value="P:ubiquitin-dependent protein catabolic process via the multivesicular body sorting pathway"/>
    <property type="evidence" value="ECO:0007669"/>
    <property type="project" value="UniProtKB-ARBA"/>
</dbReference>
<dbReference type="GO" id="GO:0046761">
    <property type="term" value="P:viral budding from plasma membrane"/>
    <property type="evidence" value="ECO:0007669"/>
    <property type="project" value="UniProtKB-ARBA"/>
</dbReference>
<dbReference type="GO" id="GO:0039702">
    <property type="term" value="P:viral budding via host ESCRT complex"/>
    <property type="evidence" value="ECO:0007669"/>
    <property type="project" value="UniProtKB-ARBA"/>
</dbReference>
<dbReference type="Gene3D" id="6.10.140.1230">
    <property type="match status" value="1"/>
</dbReference>
<dbReference type="InterPro" id="IPR005024">
    <property type="entry name" value="Snf7_fam"/>
</dbReference>
<dbReference type="PANTHER" id="PTHR10476">
    <property type="entry name" value="CHARGED MULTIVESICULAR BODY PROTEIN"/>
    <property type="match status" value="1"/>
</dbReference>
<dbReference type="Pfam" id="PF03357">
    <property type="entry name" value="Snf7"/>
    <property type="match status" value="1"/>
</dbReference>
<proteinExistence type="evidence at transcript level"/>
<keyword id="KW-0007">Acetylation</keyword>
<keyword id="KW-0131">Cell cycle</keyword>
<keyword id="KW-0132">Cell division</keyword>
<keyword id="KW-0175">Coiled coil</keyword>
<keyword id="KW-0963">Cytoplasm</keyword>
<keyword id="KW-0967">Endosome</keyword>
<keyword id="KW-0472">Membrane</keyword>
<keyword id="KW-0539">Nucleus</keyword>
<keyword id="KW-0597">Phosphoprotein</keyword>
<keyword id="KW-0653">Protein transport</keyword>
<keyword id="KW-1185">Reference proteome</keyword>
<keyword id="KW-0678">Repressor</keyword>
<keyword id="KW-0804">Transcription</keyword>
<keyword id="KW-0805">Transcription regulation</keyword>
<keyword id="KW-0813">Transport</keyword>
<evidence type="ECO:0000250" key="1"/>
<evidence type="ECO:0000250" key="2">
    <source>
        <dbReference type="UniProtKB" id="Q9HD42"/>
    </source>
</evidence>
<evidence type="ECO:0000255" key="3"/>
<evidence type="ECO:0000256" key="4">
    <source>
        <dbReference type="SAM" id="MobiDB-lite"/>
    </source>
</evidence>
<evidence type="ECO:0000305" key="5"/>